<comment type="function">
    <text evidence="1 2">Multifunctional enzyme responsible for RNA synthesis (replicase and transcriptase), cap addition, and cap methylation. Also performs the polyadenylation of subgenomic mRNAs by a stuttering mechanism at a slipery stop site present at the end of viral genes. The template is composed of the viral RNA tightly encapsidated by the nucleoprotein (N). L is packaged into virions during assembly and translocates to the 3' leader promoter to initiate transcription after entering the host cells. During transcription and replication of the genome, L does not bind the N-RNA complex directly, but is bridged by its non-catalytic cofactor P, which interacts with L and N oligomers simultaneously (By similarity). In the transcription mode, the polymerase performs the sequential transcription of all mRNAs using a termination-reinitiation mechanism responding to gene start and gene end signals. Some polymerase disengage from the template at each gene junction, resulting in a decreasing abundance of transcripts from the 3' to the 5' end of the genome (By similarity). The first gene is the most transcribed, and the last the least transcribed (By similarity). The viral phosphoprotein helps the polymerase to engage the N-RNA template and acts as a processivity factor. Polyribonucleotidyl transferase (PRNTase) adds the cap structure when the nascent RNA chain length has reached few nucleotides. Ribose 2'-O methylation of viral mRNA cap precedes and facilitates subsequent guanine-N-7 methylation, both activities being carried by the viral polymerase (By similarity). In the replication mode, the polymerase replicates the whole viral genome without recognizing the gene end transcriptional signals (By similarity). The ability of the polymerase to override the gene end signals as it is producing the antigenome is probably due to replicative RNA becoming encapsidated with nucleoprotein as it is synthesized (By similarity).</text>
</comment>
<comment type="catalytic activity">
    <reaction evidence="3">
        <text>RNA(n) + a ribonucleoside 5'-triphosphate = RNA(n+1) + diphosphate</text>
        <dbReference type="Rhea" id="RHEA:21248"/>
        <dbReference type="Rhea" id="RHEA-COMP:14527"/>
        <dbReference type="Rhea" id="RHEA-COMP:17342"/>
        <dbReference type="ChEBI" id="CHEBI:33019"/>
        <dbReference type="ChEBI" id="CHEBI:61557"/>
        <dbReference type="ChEBI" id="CHEBI:140395"/>
        <dbReference type="EC" id="2.7.7.48"/>
    </reaction>
</comment>
<comment type="catalytic activity">
    <reaction evidence="1">
        <text>GTP + H2O = GDP + phosphate + H(+)</text>
        <dbReference type="Rhea" id="RHEA:19669"/>
        <dbReference type="ChEBI" id="CHEBI:15377"/>
        <dbReference type="ChEBI" id="CHEBI:15378"/>
        <dbReference type="ChEBI" id="CHEBI:37565"/>
        <dbReference type="ChEBI" id="CHEBI:43474"/>
        <dbReference type="ChEBI" id="CHEBI:58189"/>
    </reaction>
</comment>
<comment type="catalytic activity">
    <reaction evidence="1">
        <text>a 5'-end triphospho-adenylyl-adenylyl-cytidylyl-adenosine in mRNA + GDP + H(+) = a 5'-end (5'-triphosphoguanosine)-adenylyl-adenylyl-cytidylyl-adenosine in mRNA + diphosphate</text>
        <dbReference type="Rhea" id="RHEA:65436"/>
        <dbReference type="Rhea" id="RHEA-COMP:16797"/>
        <dbReference type="Rhea" id="RHEA-COMP:16799"/>
        <dbReference type="ChEBI" id="CHEBI:15378"/>
        <dbReference type="ChEBI" id="CHEBI:33019"/>
        <dbReference type="ChEBI" id="CHEBI:58189"/>
        <dbReference type="ChEBI" id="CHEBI:156484"/>
        <dbReference type="ChEBI" id="CHEBI:156503"/>
        <dbReference type="EC" id="2.7.7.88"/>
    </reaction>
</comment>
<comment type="catalytic activity">
    <reaction evidence="1">
        <text>a 5'-end (5'-triphosphoguanosine)-adenylyl-adenylyl-cytidylyl-adenosine in mRNA + 2 S-adenosyl-L-methionine = a 5'-end (N(7)-methyl 5'-triphosphoguanosine)-(2'-O-methyladenylyl)-adenylyl-cytidylyl-adenosine in mRNA + 2 S-adenosyl-L-homocysteine + H(+)</text>
        <dbReference type="Rhea" id="RHEA:65376"/>
        <dbReference type="Rhea" id="RHEA-COMP:16797"/>
        <dbReference type="Rhea" id="RHEA-COMP:16798"/>
        <dbReference type="ChEBI" id="CHEBI:15378"/>
        <dbReference type="ChEBI" id="CHEBI:57856"/>
        <dbReference type="ChEBI" id="CHEBI:59789"/>
        <dbReference type="ChEBI" id="CHEBI:156483"/>
        <dbReference type="ChEBI" id="CHEBI:156484"/>
        <dbReference type="EC" id="2.1.1.375"/>
    </reaction>
</comment>
<comment type="catalytic activity">
    <reaction evidence="1">
        <text>a 5'-end (5'-triphosphoguanosine)-adenylyl-adenylyl-cytidylyl-adenosine in mRNA + S-adenosyl-L-methionine = a 5'-end (5'-triphosphoguanosine)-(2'-O-methyladenylyl)-adenylyl-cytidylyl-adenosine in mRNA + S-adenosyl-L-homocysteine + H(+)</text>
        <dbReference type="Rhea" id="RHEA:65380"/>
        <dbReference type="Rhea" id="RHEA-COMP:16797"/>
        <dbReference type="Rhea" id="RHEA-COMP:16801"/>
        <dbReference type="ChEBI" id="CHEBI:15378"/>
        <dbReference type="ChEBI" id="CHEBI:57856"/>
        <dbReference type="ChEBI" id="CHEBI:59789"/>
        <dbReference type="ChEBI" id="CHEBI:156482"/>
        <dbReference type="ChEBI" id="CHEBI:156484"/>
    </reaction>
</comment>
<comment type="catalytic activity">
    <reaction evidence="1">
        <text>a 5'-end (5'-triphosphoguanosine)-(2'-O-methyladenylyl)-adenylyl-cytidylyl-adenosine in mRNA + S-adenosyl-L-methionine = a 5'-end (N(7)-methyl 5'-triphosphoguanosine)-(2'-O-methyladenylyl)-adenylyl-cytidylyl-adenosine in mRNA + S-adenosyl-L-homocysteine</text>
        <dbReference type="Rhea" id="RHEA:65440"/>
        <dbReference type="Rhea" id="RHEA-COMP:16798"/>
        <dbReference type="Rhea" id="RHEA-COMP:16801"/>
        <dbReference type="ChEBI" id="CHEBI:57856"/>
        <dbReference type="ChEBI" id="CHEBI:59789"/>
        <dbReference type="ChEBI" id="CHEBI:156482"/>
        <dbReference type="ChEBI" id="CHEBI:156483"/>
    </reaction>
</comment>
<comment type="activity regulation">
    <text evidence="1">The GDP polyribonucleotidyltransferase activity is inhibited by the GDP analog DAPDP.</text>
</comment>
<comment type="subunit">
    <text evidence="1">May form homodimer. Interacts with the P protein; the association of P and L forms the polymerase complex, positions it on the template and allows to package the L polymerase in the virion, since P acts as a bridge between N and L. L binds loosely to N and is further bridged by the P protein, which interacts with L and N oligomers simultaneously.</text>
</comment>
<comment type="subcellular location">
    <subcellularLocation>
        <location evidence="1">Virion</location>
    </subcellularLocation>
    <subcellularLocation>
        <location evidence="1">Host cytoplasm</location>
    </subcellularLocation>
    <text evidence="1">L and P are packaged asymmetrically towards the blunt end of the virus. About 55 copies of L are present in the virion.</text>
</comment>
<comment type="domain">
    <text evidence="1">The RNA-dependent RNA polymerase (RdRp) domain is responsible for the RNA sythesis. The polyribonucleotidyl transferase (PRNTase) domain is responsible for the initiation of transcription at the 3'-end of the genome (priming) and pre-mRNA 5'-capping during start-stop transcription. The methyltransferase (MTase) domain is responsible for the cap methylation.</text>
</comment>
<comment type="similarity">
    <text evidence="5">Belongs to the rhabdoviridae protein L family.</text>
</comment>
<feature type="chain" id="PRO_0000287262" description="RNA-directed RNA polymerase L">
    <location>
        <begin position="1"/>
        <end position="2109"/>
    </location>
</feature>
<feature type="domain" description="RdRp catalytic" evidence="3">
    <location>
        <begin position="598"/>
        <end position="784"/>
    </location>
</feature>
<feature type="domain" description="Mononegavirus-type SAM-dependent 2'-O-MTase" evidence="4">
    <location>
        <begin position="1640"/>
        <end position="1837"/>
    </location>
</feature>
<feature type="region of interest" description="Capping domain" evidence="1">
    <location>
        <begin position="866"/>
        <end position="1334"/>
    </location>
</feature>
<feature type="region of interest" description="PRNTase domain" evidence="1">
    <location>
        <begin position="1081"/>
        <end position="1331"/>
    </location>
</feature>
<feature type="region of interest" description="priming-capping loop" evidence="1">
    <location>
        <begin position="1152"/>
        <end position="1189"/>
    </location>
</feature>
<feature type="region of interest" description="Connector domain" evidence="1">
    <location>
        <begin position="1358"/>
        <end position="1557"/>
    </location>
</feature>
<feature type="active site" description="Nucleophile; for GDP polyribonucleotidyltransferase" evidence="1">
    <location>
        <position position="1227"/>
    </location>
</feature>
<feature type="active site" description="For mRNA (nucleoside-2'-O-)-methyltransferase 2" evidence="1">
    <location>
        <position position="1651"/>
    </location>
</feature>
<feature type="active site" description="For mRNA (guanine-N(7)-)-methyltransferase and mRNA (nucleoside-2'-O-)-methyltransferase 2" evidence="1">
    <location>
        <position position="1762"/>
    </location>
</feature>
<feature type="active site" description="For mRNA (nucleoside-2'-O-)-methyltransferase 2" evidence="1">
    <location>
        <position position="1795"/>
    </location>
</feature>
<feature type="active site" description="For mRNA (nucleoside-2'-O-)-methyltransferase 2" evidence="1">
    <location>
        <position position="1833"/>
    </location>
</feature>
<feature type="binding site" evidence="2">
    <location>
        <position position="605"/>
    </location>
    <ligand>
        <name>Mg(2+)</name>
        <dbReference type="ChEBI" id="CHEBI:18420"/>
        <note>catalytic; for RNA-directed RNA polymerase activity</note>
    </ligand>
</feature>
<feature type="binding site" evidence="2">
    <location>
        <position position="714"/>
    </location>
    <ligand>
        <name>Mg(2+)</name>
        <dbReference type="ChEBI" id="CHEBI:18420"/>
        <note>catalytic; for RNA-directed RNA polymerase activity</note>
    </ligand>
</feature>
<feature type="binding site" evidence="1">
    <location>
        <position position="1081"/>
    </location>
    <ligand>
        <name>Zn(2+)</name>
        <dbReference type="ChEBI" id="CHEBI:29105"/>
        <note>structural</note>
    </ligand>
</feature>
<feature type="binding site" evidence="1">
    <location>
        <position position="1108"/>
    </location>
    <ligand>
        <name>Zn(2+)</name>
        <dbReference type="ChEBI" id="CHEBI:29105"/>
        <note>structural</note>
    </ligand>
</feature>
<feature type="binding site" evidence="1">
    <location>
        <position position="1120"/>
    </location>
    <ligand>
        <name>Zn(2+)</name>
        <dbReference type="ChEBI" id="CHEBI:29105"/>
        <label>2</label>
        <note>structural</note>
    </ligand>
</feature>
<feature type="binding site" evidence="1">
    <location>
        <position position="1123"/>
    </location>
    <ligand>
        <name>Zn(2+)</name>
        <dbReference type="ChEBI" id="CHEBI:29105"/>
        <label>2</label>
        <note>structural</note>
    </ligand>
</feature>
<feature type="binding site" evidence="1">
    <location>
        <position position="1294"/>
    </location>
    <ligand>
        <name>Zn(2+)</name>
        <dbReference type="ChEBI" id="CHEBI:29105"/>
        <label>2</label>
        <note>structural</note>
    </ligand>
</feature>
<feature type="binding site" evidence="1">
    <location>
        <position position="1296"/>
    </location>
    <ligand>
        <name>Zn(2+)</name>
        <dbReference type="ChEBI" id="CHEBI:29105"/>
        <label>2</label>
        <note>structural</note>
    </ligand>
</feature>
<feature type="binding site" evidence="1">
    <location>
        <position position="1299"/>
    </location>
    <ligand>
        <name>Zn(2+)</name>
        <dbReference type="ChEBI" id="CHEBI:29105"/>
        <note>structural</note>
    </ligand>
</feature>
<feature type="binding site" evidence="1">
    <location>
        <position position="1302"/>
    </location>
    <ligand>
        <name>Zn(2+)</name>
        <dbReference type="ChEBI" id="CHEBI:29105"/>
        <note>structural</note>
    </ligand>
</feature>
<feature type="site" description="Interaction with the phosphoprotein" evidence="1">
    <location>
        <position position="704"/>
    </location>
</feature>
<feature type="site" description="Important for escaping from the 3'-terminal leader promotter followed by the formation of a stable leaderRNA elongation complex" evidence="1">
    <location>
        <position position="1183"/>
    </location>
</feature>
<feature type="site" description="Interaction with the phosphoprotein" evidence="1">
    <location>
        <position position="1419"/>
    </location>
</feature>
<feature type="site" description="Interaction with the phosphoprotein" evidence="1">
    <location>
        <position position="1427"/>
    </location>
</feature>
<feature type="site" description="Interaction with the phosphoprotein" evidence="1">
    <location>
        <position position="1496"/>
    </location>
</feature>
<feature type="site" description="Interaction with the phosphoprotein" evidence="1">
    <location>
        <position position="1911"/>
    </location>
</feature>
<feature type="site" description="Interaction with the phosphoprotein" evidence="1">
    <location>
        <position position="1981"/>
    </location>
</feature>
<feature type="site" description="Interaction with the phosphoprotein" evidence="1">
    <location>
        <position position="2022"/>
    </location>
</feature>
<feature type="site" description="Interaction with the phosphoprotein" evidence="1">
    <location>
        <position position="2097"/>
    </location>
</feature>
<feature type="site" description="Interaction with the phosphoprotein" evidence="1">
    <location>
        <position position="2098"/>
    </location>
</feature>
<protein>
    <recommendedName>
        <fullName>RNA-directed RNA polymerase L</fullName>
        <shortName>Protein L</shortName>
    </recommendedName>
    <alternativeName>
        <fullName>Large structural protein</fullName>
    </alternativeName>
    <alternativeName>
        <fullName>Replicase</fullName>
    </alternativeName>
    <alternativeName>
        <fullName>Transcriptase</fullName>
    </alternativeName>
    <domain>
        <recommendedName>
            <fullName>RNA-directed RNA polymerase</fullName>
            <ecNumber evidence="2">2.7.7.48</ecNumber>
        </recommendedName>
    </domain>
    <domain>
        <recommendedName>
            <fullName evidence="5">GTP phosphohydrolase</fullName>
            <ecNumber evidence="1">3.6.1.-</ecNumber>
        </recommendedName>
    </domain>
    <domain>
        <recommendedName>
            <fullName evidence="5">GDP polyribonucleotidyltransferase</fullName>
            <ecNumber evidence="1">2.7.7.88</ecNumber>
        </recommendedName>
        <alternativeName>
            <fullName evidence="5">PRNTase</fullName>
        </alternativeName>
    </domain>
    <domain>
        <recommendedName>
            <fullName evidence="5">mRNA cap methyltransferase</fullName>
            <ecNumber evidence="1">2.1.1.375</ecNumber>
        </recommendedName>
        <alternativeName>
            <fullName evidence="1">mRNA (guanine-N(7)-)-methyltransferase</fullName>
            <shortName evidence="1">G-N7-MTase</shortName>
        </alternativeName>
        <alternativeName>
            <fullName evidence="1">mRNA (nucleoside-2'-O-)-methyltransferase</fullName>
            <shortName evidence="1">N1-2'-O-MTase</shortName>
        </alternativeName>
    </domain>
</protein>
<dbReference type="EC" id="2.7.7.48" evidence="2"/>
<dbReference type="EC" id="3.6.1.-" evidence="1"/>
<dbReference type="EC" id="2.7.7.88" evidence="1"/>
<dbReference type="EC" id="2.1.1.375" evidence="1"/>
<dbReference type="EMBL" id="AF473865">
    <property type="protein sequence ID" value="AAN16989.1"/>
    <property type="molecule type" value="Genomic_RNA"/>
</dbReference>
<dbReference type="SMR" id="Q8B0H5"/>
<dbReference type="Proteomes" id="UP000007625">
    <property type="component" value="Genome"/>
</dbReference>
<dbReference type="GO" id="GO:0030430">
    <property type="term" value="C:host cell cytoplasm"/>
    <property type="evidence" value="ECO:0007669"/>
    <property type="project" value="UniProtKB-SubCell"/>
</dbReference>
<dbReference type="GO" id="GO:0044423">
    <property type="term" value="C:virion component"/>
    <property type="evidence" value="ECO:0007669"/>
    <property type="project" value="UniProtKB-KW"/>
</dbReference>
<dbReference type="GO" id="GO:0005524">
    <property type="term" value="F:ATP binding"/>
    <property type="evidence" value="ECO:0007669"/>
    <property type="project" value="UniProtKB-KW"/>
</dbReference>
<dbReference type="GO" id="GO:0003924">
    <property type="term" value="F:GTPase activity"/>
    <property type="evidence" value="ECO:0007669"/>
    <property type="project" value="RHEA"/>
</dbReference>
<dbReference type="GO" id="GO:0046872">
    <property type="term" value="F:metal ion binding"/>
    <property type="evidence" value="ECO:0007669"/>
    <property type="project" value="UniProtKB-KW"/>
</dbReference>
<dbReference type="GO" id="GO:0004482">
    <property type="term" value="F:mRNA 5'-cap (guanine-N7-)-methyltransferase activity"/>
    <property type="evidence" value="ECO:0007669"/>
    <property type="project" value="InterPro"/>
</dbReference>
<dbReference type="GO" id="GO:0003968">
    <property type="term" value="F:RNA-directed RNA polymerase activity"/>
    <property type="evidence" value="ECO:0007669"/>
    <property type="project" value="UniProtKB-KW"/>
</dbReference>
<dbReference type="GO" id="GO:0039689">
    <property type="term" value="P:negative stranded viral RNA replication"/>
    <property type="evidence" value="ECO:0000250"/>
    <property type="project" value="UniProtKB"/>
</dbReference>
<dbReference type="FunFam" id="3.40.50.150:FF:000473">
    <property type="entry name" value="RNA-directed RNA polymerase L"/>
    <property type="match status" value="1"/>
</dbReference>
<dbReference type="Gene3D" id="3.40.50.150">
    <property type="entry name" value="Vaccinia Virus protein VP39"/>
    <property type="match status" value="1"/>
</dbReference>
<dbReference type="InterPro" id="IPR039530">
    <property type="entry name" value="L_methyltransferase_rhabdo"/>
</dbReference>
<dbReference type="InterPro" id="IPR039736">
    <property type="entry name" value="L_poly_C"/>
</dbReference>
<dbReference type="InterPro" id="IPR048398">
    <property type="entry name" value="Methyltrans_Mon_C"/>
</dbReference>
<dbReference type="InterPro" id="IPR048397">
    <property type="entry name" value="Methyltrans_Mon_CD"/>
</dbReference>
<dbReference type="InterPro" id="IPR026890">
    <property type="entry name" value="Mononeg_mRNAcap"/>
</dbReference>
<dbReference type="InterPro" id="IPR014023">
    <property type="entry name" value="Mononeg_RNA_pol_cat"/>
</dbReference>
<dbReference type="InterPro" id="IPR025786">
    <property type="entry name" value="Mononega_L_MeTrfase"/>
</dbReference>
<dbReference type="InterPro" id="IPR017234">
    <property type="entry name" value="RNA-dir_pol_rhabdovirus"/>
</dbReference>
<dbReference type="InterPro" id="IPR029063">
    <property type="entry name" value="SAM-dependent_MTases_sf"/>
</dbReference>
<dbReference type="NCBIfam" id="TIGR04198">
    <property type="entry name" value="paramyx_RNAcap"/>
    <property type="match status" value="1"/>
</dbReference>
<dbReference type="Pfam" id="PF21080">
    <property type="entry name" value="Methyltrans_Mon_1st"/>
    <property type="match status" value="1"/>
</dbReference>
<dbReference type="Pfam" id="PF14314">
    <property type="entry name" value="Methyltrans_Mon_2nd"/>
    <property type="match status" value="1"/>
</dbReference>
<dbReference type="Pfam" id="PF21081">
    <property type="entry name" value="Methyltrans_Mon_3rd"/>
    <property type="match status" value="1"/>
</dbReference>
<dbReference type="Pfam" id="PF14318">
    <property type="entry name" value="Mononeg_mRNAcap"/>
    <property type="match status" value="1"/>
</dbReference>
<dbReference type="Pfam" id="PF00946">
    <property type="entry name" value="Mononeg_RNA_pol"/>
    <property type="match status" value="1"/>
</dbReference>
<dbReference type="PIRSF" id="PIRSF037546">
    <property type="entry name" value="RNA_pol_RhabdoV_sub"/>
    <property type="match status" value="1"/>
</dbReference>
<dbReference type="PROSITE" id="PS50526">
    <property type="entry name" value="RDRP_SSRNA_NEG_NONSEG"/>
    <property type="match status" value="1"/>
</dbReference>
<dbReference type="PROSITE" id="PS51590">
    <property type="entry name" value="SAM_MT_MNV_L"/>
    <property type="match status" value="1"/>
</dbReference>
<organismHost>
    <name type="scientific">Aedes</name>
    <dbReference type="NCBI Taxonomy" id="7158"/>
</organismHost>
<organismHost>
    <name type="scientific">Bos taurus</name>
    <name type="common">Bovine</name>
    <dbReference type="NCBI Taxonomy" id="9913"/>
</organismHost>
<organismHost>
    <name type="scientific">Culicoides</name>
    <dbReference type="NCBI Taxonomy" id="58271"/>
</organismHost>
<organismHost>
    <name type="scientific">Equus asinus</name>
    <name type="common">Donkey</name>
    <name type="synonym">Equus africanus asinus</name>
    <dbReference type="NCBI Taxonomy" id="9793"/>
</organismHost>
<organismHost>
    <name type="scientific">Equus caballus</name>
    <name type="common">Horse</name>
    <dbReference type="NCBI Taxonomy" id="9796"/>
</organismHost>
<organismHost>
    <name type="scientific">Homo sapiens</name>
    <name type="common">Human</name>
    <dbReference type="NCBI Taxonomy" id="9606"/>
</organismHost>
<organismHost>
    <name type="scientific">Lutzomyia</name>
    <dbReference type="NCBI Taxonomy" id="252607"/>
</organismHost>
<organismHost>
    <name type="scientific">Musca domestica</name>
    <name type="common">House fly</name>
    <dbReference type="NCBI Taxonomy" id="7370"/>
</organismHost>
<organismHost>
    <name type="scientific">Simuliidae</name>
    <name type="common">black flies</name>
    <dbReference type="NCBI Taxonomy" id="7190"/>
</organismHost>
<organismHost>
    <name type="scientific">Sus scrofa</name>
    <name type="common">Pig</name>
    <dbReference type="NCBI Taxonomy" id="9823"/>
</organismHost>
<keyword id="KW-0067">ATP-binding</keyword>
<keyword id="KW-1035">Host cytoplasm</keyword>
<keyword id="KW-0378">Hydrolase</keyword>
<keyword id="KW-0460">Magnesium</keyword>
<keyword id="KW-0479">Metal-binding</keyword>
<keyword id="KW-0489">Methyltransferase</keyword>
<keyword id="KW-0506">mRNA capping</keyword>
<keyword id="KW-0507">mRNA processing</keyword>
<keyword id="KW-0511">Multifunctional enzyme</keyword>
<keyword id="KW-0547">Nucleotide-binding</keyword>
<keyword id="KW-0548">Nucleotidyltransferase</keyword>
<keyword id="KW-0696">RNA-directed RNA polymerase</keyword>
<keyword id="KW-0949">S-adenosyl-L-methionine</keyword>
<keyword id="KW-0808">Transferase</keyword>
<keyword id="KW-0693">Viral RNA replication</keyword>
<keyword id="KW-0946">Virion</keyword>
<keyword id="KW-0862">Zinc</keyword>
<gene>
    <name type="primary">L</name>
</gene>
<reference key="1">
    <citation type="journal article" date="2002" name="J. Gen. Virol.">
        <title>Full-length genome analysis of natural isolates of vesicular stomatitis virus (Indiana 1 serotype) from North, Central and South America.</title>
        <authorList>
            <person name="Rodriguez L.L."/>
            <person name="Pauszek S.J."/>
            <person name="Bunch T.A."/>
            <person name="Schumann K.R."/>
        </authorList>
    </citation>
    <scope>NUCLEOTIDE SEQUENCE [GENOMIC RNA]</scope>
</reference>
<accession>Q8B0H5</accession>
<name>L_VSIVS</name>
<sequence length="2109" mass="240642">MEVHDFETEESNDFNEDDYATREFLNPDERMTYLNHADYNLNSPLISDDIDNLIRKFNSLPIPSMWDSKKWDGVLEMLTACQANPIPTSQMHKWMGSWLMSDNHDASQGYSFLHEVDKEAEITFDVVETFIRGWGNKQIEYIKKEKWTDSFKILAYLCQKFLDLHKLTLILNAVSEVELLNLARTFKGKVRKSSHGTNICRLRVPSLGPTFISEGWAYFKKLDILMDRNFLLMVKDVIIGRMQTVLSMVCRIDNLFSEQDIFSLLNIYRIGDKIVERQGNFSYDLIKMVEPICNLKLMKLARESRPLVPQFPHFENHIKTSVDEGAKIDRGIKFLHDQIMSVKTVDLTLVIYGSFRHWGHPFIDYYAGLEKLHSQVTMKKDIDVSYAKALASDLARIVLFQQFNDHKKWFVNGDLLPHDHPFKSHVKENTWPTAAQVQDFGDKWHELPLIKCFEIPDLLDPSIIYSDKSHSMNRSEVLKHVRTNPNTPIPSKKVLQTMLDTKATNWKEFLKEIDEKGLDDDDLIIGLKGKERELKLAGRFFSLMSWKLREYFVITEYLIKTHFVPMFKGLTMADDLTAVIKKMLDSSSGQGLKSYEAICIANHIDYEKWNNHQRKLSNGPVFRVMGQFLGYPSLIERTHEFFEKSLIYYNGRPDLMRVHNNTLVNSTSQRVCWQGQEGGLEGLRQKGWSILNLLVIQREAKIRNTAVKVLAQGDNQVICTQYKTKKSRNVVELQGALNQMVSNNEKIMTAIKIGTGKLGLLINDDETMQSADYLNYGKIPIFRGVIRGLETKRWSRVTCVTNDQIPTCANIMSSVSTNALTVAHFAENPINAMIQYNYFGTFARLLLMMHDPALRQSLYEVQDKIPGLHSSTFKYAMLYLDPSIGGVSGMSLSRFLIRAFPDPVTESLSFWRFIHVHARSEHLKEMSAVFGNPEIAKFRITHIDKLVEDPTSLNIAMGMSPANLLKTEVKKCLIESRQTIKNQVIKDATIYLYHEEDRLRSFLWSINPLFPRFLSEFKSGTFLGVADGLISLFQNSRTIRNSFKKKYHRELDDLIVRSEVSSLTHLGKLHLRRGSCKMWTCSATHADTLRYKSWGRTVIGTTVPHPLEMLGPQHRKETPCAPCNTSGFNYVSVHCPDGIHDVFSSRGPLPAYLGSKTSESTSILQPWERESKVPLIKRATRLRDAISWFVEPDSKLAITILSNIHSLTGEEWTKRQHGFKRTGSALHRFSTSRMSHGGFASQSTAALTRLMATTDTMSDLGDQNFDFLFQATLLYAQITTTVARDGWTTSCTDHYHITCKSCLRPIEEITLDSNMDYTPPDVSHVLKTWRNGEGSWGQEIKQIYPLEGNWKNLAPAEQSYQVGRCIGFLYGDLAYRKSNHAEDSSLFPLSIQSRIRGRGFLKGLLDGLMRASCCQVIHRRSLAHLKRPANAVYGGLIYLIDKLSVSPPFLSLTRSGPIRDELETIPHKIPTSYPTSNRDMGVIVRNYFKYQCRLIEKGKYRSHYSQLWLFSDVLSIDFLGPFSISTTLLQILYKPSLSGKDKNELRELANLSSLLRSGEGWEDIHVKFFTKDILLCPEEIRHACKFGIAKDNNKDMSYPPWGRESRGTITTIPVYYTTTPYPKMLEVPPRIQNPLLSGIRLGQLPTGAHYKIRSILHGMGIHYRDFLSCGDGSGGMTAALLRENVHSRGIFNSLLELSGSVMRGASPEPPSALETLGGDRSRCVNGETCWEHPSDLCDPRTWDYFLRLKAGLGLQIDLIVMDMEVRDSSTSLKIESNVRNYVHRILDEQGVLIYKTYGTYICESEKNAVTILGPLFKTVDLVQTEFSSSQTSELYMVCKGLKKLIDEPNPDWSSINESWKNLYAFQSSEKEFARAKKVSTYFTLTGIPTQFIPDPFVNLETMLQIFGVPTGVSHAAALKSSDRPADLLTISLFYMAIISYYNINHIRVGPIPPNPPSDGIAQNVGIAITGISFWLSLMEKDIPLYQQCLAVIRQSFPIRWEAVSVKGGYKQKWSTRGDGLPKDTRISDSLAPIGNWIRSLELVRNQVHLNPFNEILFNQLCRTVDNHLKWSNLRKNTGIIEWINRRISKEDRSILILKSDLHEENSWRD</sequence>
<proteinExistence type="inferred from homology"/>
<evidence type="ECO:0000250" key="1">
    <source>
        <dbReference type="UniProtKB" id="P03523"/>
    </source>
</evidence>
<evidence type="ECO:0000250" key="2">
    <source>
        <dbReference type="UniProtKB" id="P28887"/>
    </source>
</evidence>
<evidence type="ECO:0000255" key="3">
    <source>
        <dbReference type="PROSITE-ProRule" id="PRU00539"/>
    </source>
</evidence>
<evidence type="ECO:0000255" key="4">
    <source>
        <dbReference type="PROSITE-ProRule" id="PRU00923"/>
    </source>
</evidence>
<evidence type="ECO:0000305" key="5"/>
<organism>
    <name type="scientific">Vesicular stomatitis Indiana virus (strain 85CLB South America)</name>
    <name type="common">VSIV</name>
    <dbReference type="NCBI Taxonomy" id="434490"/>
    <lineage>
        <taxon>Viruses</taxon>
        <taxon>Riboviria</taxon>
        <taxon>Orthornavirae</taxon>
        <taxon>Negarnaviricota</taxon>
        <taxon>Haploviricotina</taxon>
        <taxon>Monjiviricetes</taxon>
        <taxon>Mononegavirales</taxon>
        <taxon>Rhabdoviridae</taxon>
        <taxon>Alpharhabdovirinae</taxon>
        <taxon>Vesiculovirus</taxon>
        <taxon>Vesiculovirus indiana</taxon>
    </lineage>
</organism>